<sequence>MPLRPRLLLLCLWGLLLQQAETDSEGQTTGELYQRWERYARECEETLTAADPPSGMVCNGSFDMYVCWDYTAANTTAQASCPWYLPWYRHVAAGYVFRQCGSDGQWGPWRDHTQCENPEKNGAFQDQRLILERLQVVYTVGYSLSLGTLLLALLILSLFRRLHCTRNYIHMNVFLSFMLRAVAILTRDRLLPTLGPYPGDRTLTLRNQALAACRTAQIVTQYCVGANYTWLLVEGVYLHHLLVIVGGSEKGHFRCYLLLGWGAPALFVIPWVIVRYLLENTQCWERNEVKAIWWIIRTPILITILINFFIFIRILGILVSKLRTRQMRCPDYRLRLARSTLTLVPLLGVHEVVFAPVTEEQAEGTLRFAKLAFEIFLSSFQGFLVSVLYCFINKEVQSEIRRSWRHRVLHLSLRDERPCPHAELGPQALPSRSAPREVPITGSTLPSGPLHGPGEEVLESYC</sequence>
<organism>
    <name type="scientific">Mesocricetus auratus</name>
    <name type="common">Golden hamster</name>
    <dbReference type="NCBI Taxonomy" id="10036"/>
    <lineage>
        <taxon>Eukaryota</taxon>
        <taxon>Metazoa</taxon>
        <taxon>Chordata</taxon>
        <taxon>Craniata</taxon>
        <taxon>Vertebrata</taxon>
        <taxon>Euteleostomi</taxon>
        <taxon>Mammalia</taxon>
        <taxon>Eutheria</taxon>
        <taxon>Euarchontoglires</taxon>
        <taxon>Glires</taxon>
        <taxon>Rodentia</taxon>
        <taxon>Myomorpha</taxon>
        <taxon>Muroidea</taxon>
        <taxon>Cricetidae</taxon>
        <taxon>Cricetinae</taxon>
        <taxon>Mesocricetus</taxon>
    </lineage>
</organism>
<name>GIPR_MESAU</name>
<reference key="1">
    <citation type="journal article" date="1994" name="Biochem. Biophys. Res. Commun.">
        <title>Hamster gastric inhibitory polypeptide receptor expressed in pancreatic islets and clonal insulin-secreting cells: its structure and functional properties.</title>
        <authorList>
            <person name="Yasuda K."/>
            <person name="Inagaki N."/>
            <person name="Yamada Y."/>
            <person name="Kubota A."/>
            <person name="Seino S."/>
            <person name="Seino Y."/>
        </authorList>
    </citation>
    <scope>NUCLEOTIDE SEQUENCE [MRNA]</scope>
    <scope>FUNCTION</scope>
    <scope>TISSUE SPECIFICITY</scope>
</reference>
<evidence type="ECO:0000250" key="1">
    <source>
        <dbReference type="UniProtKB" id="P48546"/>
    </source>
</evidence>
<evidence type="ECO:0000255" key="2"/>
<evidence type="ECO:0000256" key="3">
    <source>
        <dbReference type="SAM" id="MobiDB-lite"/>
    </source>
</evidence>
<evidence type="ECO:0000269" key="4">
    <source>
    </source>
</evidence>
<evidence type="ECO:0000305" key="5"/>
<proteinExistence type="evidence at transcript level"/>
<feature type="signal peptide" evidence="2">
    <location>
        <begin position="1"/>
        <end position="18"/>
    </location>
</feature>
<feature type="chain" id="PRO_0000012826" description="Gastric inhibitory polypeptide receptor">
    <location>
        <begin position="19"/>
        <end position="462"/>
    </location>
</feature>
<feature type="topological domain" description="Extracellular" evidence="2">
    <location>
        <begin position="19"/>
        <end position="135"/>
    </location>
</feature>
<feature type="transmembrane region" description="Helical; Name=1" evidence="2">
    <location>
        <begin position="136"/>
        <end position="158"/>
    </location>
</feature>
<feature type="topological domain" description="Cytoplasmic" evidence="2">
    <location>
        <begin position="159"/>
        <end position="166"/>
    </location>
</feature>
<feature type="transmembrane region" description="Helical; Name=2" evidence="2">
    <location>
        <begin position="167"/>
        <end position="186"/>
    </location>
</feature>
<feature type="topological domain" description="Extracellular" evidence="2">
    <location>
        <begin position="187"/>
        <end position="214"/>
    </location>
</feature>
<feature type="transmembrane region" description="Helical; Name=3" evidence="2">
    <location>
        <begin position="215"/>
        <end position="239"/>
    </location>
</feature>
<feature type="topological domain" description="Cytoplasmic" evidence="2">
    <location>
        <begin position="240"/>
        <end position="251"/>
    </location>
</feature>
<feature type="transmembrane region" description="Helical; Name=4" evidence="2">
    <location>
        <begin position="252"/>
        <end position="275"/>
    </location>
</feature>
<feature type="topological domain" description="Extracellular" evidence="2">
    <location>
        <begin position="276"/>
        <end position="290"/>
    </location>
</feature>
<feature type="transmembrane region" description="Helical; Name=5" evidence="2">
    <location>
        <begin position="291"/>
        <end position="316"/>
    </location>
</feature>
<feature type="topological domain" description="Cytoplasmic" evidence="2">
    <location>
        <begin position="317"/>
        <end position="338"/>
    </location>
</feature>
<feature type="transmembrane region" description="Helical; Name=6" evidence="2">
    <location>
        <begin position="339"/>
        <end position="359"/>
    </location>
</feature>
<feature type="topological domain" description="Extracellular" evidence="2">
    <location>
        <begin position="360"/>
        <end position="374"/>
    </location>
</feature>
<feature type="transmembrane region" description="Helical; Name=7" evidence="2">
    <location>
        <begin position="375"/>
        <end position="395"/>
    </location>
</feature>
<feature type="topological domain" description="Cytoplasmic" evidence="2">
    <location>
        <begin position="396"/>
        <end position="462"/>
    </location>
</feature>
<feature type="region of interest" description="Disordered" evidence="3">
    <location>
        <begin position="421"/>
        <end position="462"/>
    </location>
</feature>
<feature type="glycosylation site" description="N-linked (GlcNAc...) asparagine" evidence="2">
    <location>
        <position position="59"/>
    </location>
</feature>
<feature type="glycosylation site" description="N-linked (GlcNAc...) asparagine" evidence="2">
    <location>
        <position position="74"/>
    </location>
</feature>
<feature type="disulfide bond" evidence="1">
    <location>
        <begin position="43"/>
        <end position="67"/>
    </location>
</feature>
<feature type="disulfide bond" evidence="1">
    <location>
        <begin position="58"/>
        <end position="100"/>
    </location>
</feature>
<feature type="disulfide bond" evidence="1">
    <location>
        <begin position="81"/>
        <end position="115"/>
    </location>
</feature>
<keyword id="KW-1003">Cell membrane</keyword>
<keyword id="KW-1015">Disulfide bond</keyword>
<keyword id="KW-0297">G-protein coupled receptor</keyword>
<keyword id="KW-0325">Glycoprotein</keyword>
<keyword id="KW-0472">Membrane</keyword>
<keyword id="KW-0675">Receptor</keyword>
<keyword id="KW-1185">Reference proteome</keyword>
<keyword id="KW-0732">Signal</keyword>
<keyword id="KW-0807">Transducer</keyword>
<keyword id="KW-0812">Transmembrane</keyword>
<keyword id="KW-1133">Transmembrane helix</keyword>
<gene>
    <name type="primary">GIPR</name>
</gene>
<accession>P43218</accession>
<protein>
    <recommendedName>
        <fullName>Gastric inhibitory polypeptide receptor</fullName>
        <shortName>GIP-R</shortName>
    </recommendedName>
    <alternativeName>
        <fullName>Glucose-dependent insulinotropic polypeptide receptor</fullName>
    </alternativeName>
</protein>
<dbReference type="EMBL" id="D38103">
    <property type="protein sequence ID" value="BAA07284.1"/>
    <property type="molecule type" value="mRNA"/>
</dbReference>
<dbReference type="SMR" id="P43218"/>
<dbReference type="STRING" id="10036.ENSMAUP00000024057"/>
<dbReference type="GlyCosmos" id="P43218">
    <property type="glycosylation" value="2 sites, No reported glycans"/>
</dbReference>
<dbReference type="eggNOG" id="KOG4564">
    <property type="taxonomic scope" value="Eukaryota"/>
</dbReference>
<dbReference type="Proteomes" id="UP000189706">
    <property type="component" value="Unplaced"/>
</dbReference>
<dbReference type="GO" id="GO:0005886">
    <property type="term" value="C:plasma membrane"/>
    <property type="evidence" value="ECO:0007669"/>
    <property type="project" value="UniProtKB-SubCell"/>
</dbReference>
<dbReference type="GO" id="GO:0008528">
    <property type="term" value="F:G protein-coupled peptide receptor activity"/>
    <property type="evidence" value="ECO:0007669"/>
    <property type="project" value="TreeGrafter"/>
</dbReference>
<dbReference type="GO" id="GO:0016519">
    <property type="term" value="F:gastric inhibitory peptide receptor activity"/>
    <property type="evidence" value="ECO:0007669"/>
    <property type="project" value="InterPro"/>
</dbReference>
<dbReference type="GO" id="GO:0017046">
    <property type="term" value="F:peptide hormone binding"/>
    <property type="evidence" value="ECO:0007669"/>
    <property type="project" value="TreeGrafter"/>
</dbReference>
<dbReference type="GO" id="GO:0007188">
    <property type="term" value="P:adenylate cyclase-modulating G protein-coupled receptor signaling pathway"/>
    <property type="evidence" value="ECO:0007669"/>
    <property type="project" value="TreeGrafter"/>
</dbReference>
<dbReference type="GO" id="GO:0007166">
    <property type="term" value="P:cell surface receptor signaling pathway"/>
    <property type="evidence" value="ECO:0007669"/>
    <property type="project" value="InterPro"/>
</dbReference>
<dbReference type="CDD" id="cd15929">
    <property type="entry name" value="7tmB1_GlucagonR-like"/>
    <property type="match status" value="1"/>
</dbReference>
<dbReference type="FunFam" id="1.20.1070.10:FF:000229">
    <property type="entry name" value="Gastric inhibitory polypeptide receptor"/>
    <property type="match status" value="1"/>
</dbReference>
<dbReference type="FunFam" id="4.10.1240.10:FF:000019">
    <property type="entry name" value="Gastric inhibitory polypeptide receptor"/>
    <property type="match status" value="1"/>
</dbReference>
<dbReference type="Gene3D" id="4.10.1240.10">
    <property type="entry name" value="GPCR, family 2, extracellular hormone receptor domain"/>
    <property type="match status" value="1"/>
</dbReference>
<dbReference type="Gene3D" id="1.20.1070.10">
    <property type="entry name" value="Rhodopsin 7-helix transmembrane proteins"/>
    <property type="match status" value="1"/>
</dbReference>
<dbReference type="InterPro" id="IPR050332">
    <property type="entry name" value="GPCR_2"/>
</dbReference>
<dbReference type="InterPro" id="IPR017981">
    <property type="entry name" value="GPCR_2-like_7TM"/>
</dbReference>
<dbReference type="InterPro" id="IPR036445">
    <property type="entry name" value="GPCR_2_extracell_dom_sf"/>
</dbReference>
<dbReference type="InterPro" id="IPR001879">
    <property type="entry name" value="GPCR_2_extracellular_dom"/>
</dbReference>
<dbReference type="InterPro" id="IPR001749">
    <property type="entry name" value="GPCR_2_GIP_rcpt"/>
</dbReference>
<dbReference type="InterPro" id="IPR000832">
    <property type="entry name" value="GPCR_2_secretin-like"/>
</dbReference>
<dbReference type="InterPro" id="IPR017983">
    <property type="entry name" value="GPCR_2_secretin-like_CS"/>
</dbReference>
<dbReference type="PANTHER" id="PTHR45620:SF5">
    <property type="entry name" value="GASTRIC INHIBITORY POLYPEPTIDE RECEPTOR"/>
    <property type="match status" value="1"/>
</dbReference>
<dbReference type="PANTHER" id="PTHR45620">
    <property type="entry name" value="PDF RECEPTOR-LIKE PROTEIN-RELATED"/>
    <property type="match status" value="1"/>
</dbReference>
<dbReference type="Pfam" id="PF00002">
    <property type="entry name" value="7tm_2"/>
    <property type="match status" value="1"/>
</dbReference>
<dbReference type="Pfam" id="PF02793">
    <property type="entry name" value="HRM"/>
    <property type="match status" value="1"/>
</dbReference>
<dbReference type="PRINTS" id="PR01129">
    <property type="entry name" value="GIPRECEPTOR"/>
</dbReference>
<dbReference type="PRINTS" id="PR00249">
    <property type="entry name" value="GPCRSECRETIN"/>
</dbReference>
<dbReference type="SMART" id="SM00008">
    <property type="entry name" value="HormR"/>
    <property type="match status" value="1"/>
</dbReference>
<dbReference type="SUPFAM" id="SSF81321">
    <property type="entry name" value="Family A G protein-coupled receptor-like"/>
    <property type="match status" value="1"/>
</dbReference>
<dbReference type="SUPFAM" id="SSF111418">
    <property type="entry name" value="Hormone receptor domain"/>
    <property type="match status" value="1"/>
</dbReference>
<dbReference type="PROSITE" id="PS00649">
    <property type="entry name" value="G_PROTEIN_RECEP_F2_1"/>
    <property type="match status" value="1"/>
</dbReference>
<dbReference type="PROSITE" id="PS00650">
    <property type="entry name" value="G_PROTEIN_RECEP_F2_2"/>
    <property type="match status" value="1"/>
</dbReference>
<dbReference type="PROSITE" id="PS50227">
    <property type="entry name" value="G_PROTEIN_RECEP_F2_3"/>
    <property type="match status" value="1"/>
</dbReference>
<dbReference type="PROSITE" id="PS50261">
    <property type="entry name" value="G_PROTEIN_RECEP_F2_4"/>
    <property type="match status" value="1"/>
</dbReference>
<comment type="function">
    <text evidence="4">This is a receptor for GIP. The activity of this receptor is mediated by G proteins which activate adenylyl cyclase.</text>
</comment>
<comment type="subunit">
    <text evidence="1">May form homodimers and heterodimers with GLP1R.</text>
</comment>
<comment type="subcellular location">
    <subcellularLocation>
        <location evidence="5">Cell membrane</location>
        <topology evidence="2">Multi-pass membrane protein</topology>
    </subcellularLocation>
</comment>
<comment type="tissue specificity">
    <text evidence="4">Widely distributed including pancreatic islets, brain and various peripheral tissues.</text>
</comment>
<comment type="PTM">
    <text evidence="1">N-glycosylation is required for cell surface expression and lengthens receptor half-life by preventing degradation in the ER.</text>
</comment>
<comment type="similarity">
    <text evidence="5">Belongs to the G-protein coupled receptor 2 family.</text>
</comment>